<protein>
    <recommendedName>
        <fullName>Ras-GEF domain-containing family member 1B</fullName>
    </recommendedName>
    <alternativeName>
        <fullName>GPI gamma-4</fullName>
    </alternativeName>
</protein>
<feature type="chain" id="PRO_0000297639" description="Ras-GEF domain-containing family member 1B">
    <location>
        <begin position="1"/>
        <end position="473"/>
    </location>
</feature>
<feature type="domain" description="N-terminal Ras-GEF" evidence="2">
    <location>
        <begin position="34"/>
        <end position="161"/>
    </location>
</feature>
<feature type="domain" description="Ras-GEF" evidence="3">
    <location>
        <begin position="205"/>
        <end position="453"/>
    </location>
</feature>
<feature type="splice variant" id="VSP_059002" description="In isoform 3." evidence="8">
    <original>MPQTPPFSAMFDSSGYNRNLYQSAEDSCGGLYYHDNNLLSGSLEALIQHLVPNVDYYPDRTYIFTFLLSSRLFMHPYELMAKVCHLCVEHQRLSEGDGDKNQMRKIAPKILQLLTE</original>
    <variation>MAKFLAALLGCTLPSKGASPVLEGTIFSTLAGEKSSSDYSKEQQWKPVYCSLAAMCLSNPLIEKPGGKIPTKTPNISALPLDIFIHPLKTFILPRSFVQTATSETTHFACLSMSWS</variation>
    <location>
        <begin position="1"/>
        <end position="116"/>
    </location>
</feature>
<feature type="splice variant" id="VSP_059003" description="In isoform 3." evidence="8">
    <location>
        <begin position="117"/>
        <end position="473"/>
    </location>
</feature>
<feature type="splice variant" id="VSP_027315" description="In isoform 2." evidence="6 7">
    <location>
        <position position="147"/>
    </location>
</feature>
<feature type="sequence conflict" description="In Ref. 2; BAE29099." evidence="8" ref="2">
    <original>P</original>
    <variation>H</variation>
    <location>
        <position position="436"/>
    </location>
</feature>
<feature type="sequence conflict" description="In Ref. 2; AK048739." evidence="8" ref="2">
    <original>T</original>
    <variation>N</variation>
    <location sequence="Q8JZL7-3">
        <position position="71"/>
    </location>
</feature>
<accession>Q8JZL7</accession>
<accession>F5H8M5</accession>
<accession>Q3UE12</accession>
<accession>Q8C189</accession>
<name>RGF1B_MOUSE</name>
<comment type="function">
    <text evidence="5">Guanine nucleotide exchange factor (GEF) with specificity for RAP2A, it doesn't seems to activate other Ras family proteins (in vitro).</text>
</comment>
<comment type="subunit">
    <text evidence="1 5">Interacts with CCDC124 during cytokinesis (By similarity). Interacts with Ras family proteins.</text>
</comment>
<comment type="subcellular location">
    <subcellularLocation>
        <location evidence="5">Early endosome</location>
    </subcellularLocation>
    <subcellularLocation>
        <location evidence="5">Late endosome</location>
    </subcellularLocation>
    <subcellularLocation>
        <location evidence="1">Midbody</location>
    </subcellularLocation>
    <text evidence="1">Localizes to midbody at telophase (By similarity). May shuttle between early and late endosomes. Does not colocalize with lysosomal markers.</text>
</comment>
<comment type="alternative products">
    <event type="alternative splicing"/>
    <isoform>
        <id>Q8JZL7-1</id>
        <name>1</name>
        <sequence type="displayed"/>
    </isoform>
    <isoform>
        <id>Q8JZL7-2</id>
        <name>2</name>
        <sequence type="described" ref="VSP_027315"/>
    </isoform>
    <isoform>
        <id>Q8JZL7-3</id>
        <name>3</name>
        <sequence type="described" ref="VSP_059002 VSP_059003"/>
    </isoform>
</comment>
<comment type="tissue specificity">
    <text evidence="4">Constitutively expressed in brain, intestine and testis. Low constitutive expression, if any, in heart, lung, lymph nodes and thymus. Up-regulated in heart, kidney, liver, lymph nodes, spleen and thymus at day 20 after infection with Trypanosoma cruzi. Not detected in muscle.</text>
</comment>
<comment type="induction">
    <text evidence="4 5">In vitro, up-regulated in peritoneal macrophages by GPI-mucins, bacterial lipopolysaccharides (LPS) and poly(I:C). Small induction, if any, by IFNG alone. Induction is maximal 12 and 18 hours following LPS stimulation (at protein level). Also induced in T-helper cells activated by phytohemagglutinin. In vivo, up-regulated by infection with protozoan parasites, including Plasmodium chabaudi and Trypanosoma cruzi. This induction is dependent upon IFNG, MYD88 and TICAM1.</text>
</comment>
<comment type="sequence caution" evidence="8">
    <molecule>Isoform 3</molecule>
    <conflict type="frameshift">
        <sequence resource="EMBL" id="AK048739"/>
    </conflict>
</comment>
<keyword id="KW-0025">Alternative splicing</keyword>
<keyword id="KW-0967">Endosome</keyword>
<keyword id="KW-0344">Guanine-nucleotide releasing factor</keyword>
<keyword id="KW-1185">Reference proteome</keyword>
<proteinExistence type="evidence at protein level"/>
<evidence type="ECO:0000250" key="1"/>
<evidence type="ECO:0000255" key="2">
    <source>
        <dbReference type="PROSITE-ProRule" id="PRU00135"/>
    </source>
</evidence>
<evidence type="ECO:0000255" key="3">
    <source>
        <dbReference type="PROSITE-ProRule" id="PRU00168"/>
    </source>
</evidence>
<evidence type="ECO:0000269" key="4">
    <source>
    </source>
</evidence>
<evidence type="ECO:0000269" key="5">
    <source>
    </source>
</evidence>
<evidence type="ECO:0000303" key="6">
    <source>
    </source>
</evidence>
<evidence type="ECO:0000303" key="7">
    <source>
    </source>
</evidence>
<evidence type="ECO:0000305" key="8"/>
<evidence type="ECO:0000312" key="9">
    <source>
        <dbReference type="EMBL" id="AK048739"/>
    </source>
</evidence>
<evidence type="ECO:0000312" key="10">
    <source>
        <dbReference type="EMBL" id="BAC26101.1"/>
    </source>
</evidence>
<evidence type="ECO:0000312" key="11">
    <source>
        <dbReference type="EMBL" id="BAE29099.1"/>
    </source>
</evidence>
<evidence type="ECO:0000312" key="12">
    <source>
        <dbReference type="Proteomes" id="UP000000589"/>
    </source>
</evidence>
<reference key="1">
    <citation type="journal article" date="2002" name="J. Leukoc. Biol.">
        <title>Identification and characterization of a novel mouse gene encoding a Ras-associated guanine nucleotide exchange factor: expression in macrophages and myocarditis elicited by Trypanosoma cruzi parasites.</title>
        <authorList>
            <person name="Ferreira L.R.P."/>
            <person name="Abrantes E.F."/>
            <person name="Rodrigues C.V."/>
            <person name="Caetano B."/>
            <person name="Cerqueira G.C."/>
            <person name="Salim A.C."/>
            <person name="Reis L.F.L."/>
            <person name="Gazzinelli R.T."/>
        </authorList>
    </citation>
    <scope>NUCLEOTIDE SEQUENCE [GENOMIC DNA / MRNA] (ISOFORM 1)</scope>
    <scope>TISSUE SPECIFICITY</scope>
    <scope>INDUCTION</scope>
    <source>
        <strain>C3H/HeJ</strain>
    </source>
</reference>
<reference key="2">
    <citation type="journal article" date="2005" name="Science">
        <title>The transcriptional landscape of the mammalian genome.</title>
        <authorList>
            <person name="Carninci P."/>
            <person name="Kasukawa T."/>
            <person name="Katayama S."/>
            <person name="Gough J."/>
            <person name="Frith M.C."/>
            <person name="Maeda N."/>
            <person name="Oyama R."/>
            <person name="Ravasi T."/>
            <person name="Lenhard B."/>
            <person name="Wells C."/>
            <person name="Kodzius R."/>
            <person name="Shimokawa K."/>
            <person name="Bajic V.B."/>
            <person name="Brenner S.E."/>
            <person name="Batalov S."/>
            <person name="Forrest A.R."/>
            <person name="Zavolan M."/>
            <person name="Davis M.J."/>
            <person name="Wilming L.G."/>
            <person name="Aidinis V."/>
            <person name="Allen J.E."/>
            <person name="Ambesi-Impiombato A."/>
            <person name="Apweiler R."/>
            <person name="Aturaliya R.N."/>
            <person name="Bailey T.L."/>
            <person name="Bansal M."/>
            <person name="Baxter L."/>
            <person name="Beisel K.W."/>
            <person name="Bersano T."/>
            <person name="Bono H."/>
            <person name="Chalk A.M."/>
            <person name="Chiu K.P."/>
            <person name="Choudhary V."/>
            <person name="Christoffels A."/>
            <person name="Clutterbuck D.R."/>
            <person name="Crowe M.L."/>
            <person name="Dalla E."/>
            <person name="Dalrymple B.P."/>
            <person name="de Bono B."/>
            <person name="Della Gatta G."/>
            <person name="di Bernardo D."/>
            <person name="Down T."/>
            <person name="Engstrom P."/>
            <person name="Fagiolini M."/>
            <person name="Faulkner G."/>
            <person name="Fletcher C.F."/>
            <person name="Fukushima T."/>
            <person name="Furuno M."/>
            <person name="Futaki S."/>
            <person name="Gariboldi M."/>
            <person name="Georgii-Hemming P."/>
            <person name="Gingeras T.R."/>
            <person name="Gojobori T."/>
            <person name="Green R.E."/>
            <person name="Gustincich S."/>
            <person name="Harbers M."/>
            <person name="Hayashi Y."/>
            <person name="Hensch T.K."/>
            <person name="Hirokawa N."/>
            <person name="Hill D."/>
            <person name="Huminiecki L."/>
            <person name="Iacono M."/>
            <person name="Ikeo K."/>
            <person name="Iwama A."/>
            <person name="Ishikawa T."/>
            <person name="Jakt M."/>
            <person name="Kanapin A."/>
            <person name="Katoh M."/>
            <person name="Kawasawa Y."/>
            <person name="Kelso J."/>
            <person name="Kitamura H."/>
            <person name="Kitano H."/>
            <person name="Kollias G."/>
            <person name="Krishnan S.P."/>
            <person name="Kruger A."/>
            <person name="Kummerfeld S.K."/>
            <person name="Kurochkin I.V."/>
            <person name="Lareau L.F."/>
            <person name="Lazarevic D."/>
            <person name="Lipovich L."/>
            <person name="Liu J."/>
            <person name="Liuni S."/>
            <person name="McWilliam S."/>
            <person name="Madan Babu M."/>
            <person name="Madera M."/>
            <person name="Marchionni L."/>
            <person name="Matsuda H."/>
            <person name="Matsuzawa S."/>
            <person name="Miki H."/>
            <person name="Mignone F."/>
            <person name="Miyake S."/>
            <person name="Morris K."/>
            <person name="Mottagui-Tabar S."/>
            <person name="Mulder N."/>
            <person name="Nakano N."/>
            <person name="Nakauchi H."/>
            <person name="Ng P."/>
            <person name="Nilsson R."/>
            <person name="Nishiguchi S."/>
            <person name="Nishikawa S."/>
            <person name="Nori F."/>
            <person name="Ohara O."/>
            <person name="Okazaki Y."/>
            <person name="Orlando V."/>
            <person name="Pang K.C."/>
            <person name="Pavan W.J."/>
            <person name="Pavesi G."/>
            <person name="Pesole G."/>
            <person name="Petrovsky N."/>
            <person name="Piazza S."/>
            <person name="Reed J."/>
            <person name="Reid J.F."/>
            <person name="Ring B.Z."/>
            <person name="Ringwald M."/>
            <person name="Rost B."/>
            <person name="Ruan Y."/>
            <person name="Salzberg S.L."/>
            <person name="Sandelin A."/>
            <person name="Schneider C."/>
            <person name="Schoenbach C."/>
            <person name="Sekiguchi K."/>
            <person name="Semple C.A."/>
            <person name="Seno S."/>
            <person name="Sessa L."/>
            <person name="Sheng Y."/>
            <person name="Shibata Y."/>
            <person name="Shimada H."/>
            <person name="Shimada K."/>
            <person name="Silva D."/>
            <person name="Sinclair B."/>
            <person name="Sperling S."/>
            <person name="Stupka E."/>
            <person name="Sugiura K."/>
            <person name="Sultana R."/>
            <person name="Takenaka Y."/>
            <person name="Taki K."/>
            <person name="Tammoja K."/>
            <person name="Tan S.L."/>
            <person name="Tang S."/>
            <person name="Taylor M.S."/>
            <person name="Tegner J."/>
            <person name="Teichmann S.A."/>
            <person name="Ueda H.R."/>
            <person name="van Nimwegen E."/>
            <person name="Verardo R."/>
            <person name="Wei C.L."/>
            <person name="Yagi K."/>
            <person name="Yamanishi H."/>
            <person name="Zabarovsky E."/>
            <person name="Zhu S."/>
            <person name="Zimmer A."/>
            <person name="Hide W."/>
            <person name="Bult C."/>
            <person name="Grimmond S.M."/>
            <person name="Teasdale R.D."/>
            <person name="Liu E.T."/>
            <person name="Brusic V."/>
            <person name="Quackenbush J."/>
            <person name="Wahlestedt C."/>
            <person name="Mattick J.S."/>
            <person name="Hume D.A."/>
            <person name="Kai C."/>
            <person name="Sasaki D."/>
            <person name="Tomaru Y."/>
            <person name="Fukuda S."/>
            <person name="Kanamori-Katayama M."/>
            <person name="Suzuki M."/>
            <person name="Aoki J."/>
            <person name="Arakawa T."/>
            <person name="Iida J."/>
            <person name="Imamura K."/>
            <person name="Itoh M."/>
            <person name="Kato T."/>
            <person name="Kawaji H."/>
            <person name="Kawagashira N."/>
            <person name="Kawashima T."/>
            <person name="Kojima M."/>
            <person name="Kondo S."/>
            <person name="Konno H."/>
            <person name="Nakano K."/>
            <person name="Ninomiya N."/>
            <person name="Nishio T."/>
            <person name="Okada M."/>
            <person name="Plessy C."/>
            <person name="Shibata K."/>
            <person name="Shiraki T."/>
            <person name="Suzuki S."/>
            <person name="Tagami M."/>
            <person name="Waki K."/>
            <person name="Watahiki A."/>
            <person name="Okamura-Oho Y."/>
            <person name="Suzuki H."/>
            <person name="Kawai J."/>
            <person name="Hayashizaki Y."/>
        </authorList>
    </citation>
    <scope>NUCLEOTIDE SEQUENCE [LARGE SCALE MRNA] (ISOFORMS 1; 2 AND 3)</scope>
    <source>
        <strain>C57BL/6J</strain>
        <tissue evidence="11">Bone marrow macrophage</tissue>
        <tissue evidence="9">Cerebellum</tissue>
        <tissue evidence="10">Skin</tissue>
    </source>
</reference>
<reference key="3">
    <citation type="journal article" date="2009" name="PLoS Biol.">
        <title>Lineage-specific biology revealed by a finished genome assembly of the mouse.</title>
        <authorList>
            <person name="Church D.M."/>
            <person name="Goodstadt L."/>
            <person name="Hillier L.W."/>
            <person name="Zody M.C."/>
            <person name="Goldstein S."/>
            <person name="She X."/>
            <person name="Bult C.J."/>
            <person name="Agarwala R."/>
            <person name="Cherry J.L."/>
            <person name="DiCuccio M."/>
            <person name="Hlavina W."/>
            <person name="Kapustin Y."/>
            <person name="Meric P."/>
            <person name="Maglott D."/>
            <person name="Birtle Z."/>
            <person name="Marques A.C."/>
            <person name="Graves T."/>
            <person name="Zhou S."/>
            <person name="Teague B."/>
            <person name="Potamousis K."/>
            <person name="Churas C."/>
            <person name="Place M."/>
            <person name="Herschleb J."/>
            <person name="Runnheim R."/>
            <person name="Forrest D."/>
            <person name="Amos-Landgraf J."/>
            <person name="Schwartz D.C."/>
            <person name="Cheng Z."/>
            <person name="Lindblad-Toh K."/>
            <person name="Eichler E.E."/>
            <person name="Ponting C.P."/>
        </authorList>
    </citation>
    <scope>NUCLEOTIDE SEQUENCE [LARGE SCALE GENOMIC DNA]</scope>
    <source>
        <strain evidence="12">C57BL/6J</strain>
    </source>
</reference>
<reference key="4">
    <citation type="journal article" date="2004" name="Genome Res.">
        <title>The status, quality, and expansion of the NIH full-length cDNA project: the Mammalian Gene Collection (MGC).</title>
        <authorList>
            <consortium name="The MGC Project Team"/>
        </authorList>
    </citation>
    <scope>NUCLEOTIDE SEQUENCE [LARGE SCALE MRNA] (ISOFORMS 1 AND 2)</scope>
    <source>
        <strain>C57BL/6J</strain>
        <tissue>Brain</tissue>
    </source>
</reference>
<reference key="5">
    <citation type="journal article" date="2010" name="Genes Immun.">
        <title>Early endosome localization and activity of RasGEF1b, a toll-like receptor-inducible Ras guanine-nucleotide exchange factor.</title>
        <authorList>
            <person name="Andrade W.A."/>
            <person name="Silva A.M."/>
            <person name="Alves V.S."/>
            <person name="Salgado A.P."/>
            <person name="Melo M.B."/>
            <person name="Andrade H.M."/>
            <person name="Dall'Orto F.V."/>
            <person name="Garcia S.A."/>
            <person name="Silveira T.N."/>
            <person name="Gazzinelli R.T."/>
        </authorList>
    </citation>
    <scope>FUNCTION</scope>
    <scope>INTERACTION WITH RAS</scope>
    <scope>SUBCELLULAR LOCATION</scope>
    <scope>INDUCTION</scope>
</reference>
<dbReference type="EMBL" id="AY129963">
    <property type="protein sequence ID" value="AAM77973.1"/>
    <property type="molecule type" value="mRNA"/>
</dbReference>
<dbReference type="EMBL" id="AY129964">
    <property type="protein sequence ID" value="AAM77974.1"/>
    <property type="molecule type" value="Genomic_DNA"/>
</dbReference>
<dbReference type="EMBL" id="AK028756">
    <property type="protein sequence ID" value="BAC26101.1"/>
    <property type="molecule type" value="mRNA"/>
</dbReference>
<dbReference type="EMBL" id="AK048739">
    <property type="status" value="NOT_ANNOTATED_CDS"/>
    <property type="molecule type" value="mRNA"/>
</dbReference>
<dbReference type="EMBL" id="AK149812">
    <property type="protein sequence ID" value="BAE29099.1"/>
    <property type="molecule type" value="mRNA"/>
</dbReference>
<dbReference type="EMBL" id="AC121578">
    <property type="status" value="NOT_ANNOTATED_CDS"/>
    <property type="molecule type" value="Genomic_DNA"/>
</dbReference>
<dbReference type="EMBL" id="AC122348">
    <property type="status" value="NOT_ANNOTATED_CDS"/>
    <property type="molecule type" value="Genomic_DNA"/>
</dbReference>
<dbReference type="EMBL" id="AC125319">
    <property type="status" value="NOT_ANNOTATED_CDS"/>
    <property type="molecule type" value="Genomic_DNA"/>
</dbReference>
<dbReference type="EMBL" id="AC132257">
    <property type="status" value="NOT_ANNOTATED_CDS"/>
    <property type="molecule type" value="Genomic_DNA"/>
</dbReference>
<dbReference type="EMBL" id="AC132386">
    <property type="status" value="NOT_ANNOTATED_CDS"/>
    <property type="molecule type" value="Genomic_DNA"/>
</dbReference>
<dbReference type="EMBL" id="BC050858">
    <property type="protein sequence ID" value="AAH50858.1"/>
    <property type="molecule type" value="mRNA"/>
</dbReference>
<dbReference type="EMBL" id="BC052726">
    <property type="protein sequence ID" value="AAH52726.1"/>
    <property type="molecule type" value="mRNA"/>
</dbReference>
<dbReference type="CCDS" id="CCDS39179.1">
    <molecule id="Q8JZL7-1"/>
</dbReference>
<dbReference type="CCDS" id="CCDS51570.1">
    <molecule id="Q8JZL7-2"/>
</dbReference>
<dbReference type="RefSeq" id="NP_665838.1">
    <molecule id="Q8JZL7-1"/>
    <property type="nucleotide sequence ID" value="NM_145839.2"/>
</dbReference>
<dbReference type="RefSeq" id="NP_851835.1">
    <molecule id="Q8JZL7-2"/>
    <property type="nucleotide sequence ID" value="NM_181318.4"/>
</dbReference>
<dbReference type="SMR" id="Q8JZL7"/>
<dbReference type="BioGRID" id="235908">
    <property type="interactions" value="19"/>
</dbReference>
<dbReference type="FunCoup" id="Q8JZL7">
    <property type="interactions" value="736"/>
</dbReference>
<dbReference type="STRING" id="10090.ENSMUSP00000031276"/>
<dbReference type="iPTMnet" id="Q8JZL7"/>
<dbReference type="PhosphoSitePlus" id="Q8JZL7"/>
<dbReference type="PaxDb" id="10090-ENSMUSP00000031276"/>
<dbReference type="ProteomicsDB" id="254929">
    <molecule id="Q8JZL7-1"/>
</dbReference>
<dbReference type="ProteomicsDB" id="254930">
    <molecule id="Q8JZL7-2"/>
</dbReference>
<dbReference type="ProteomicsDB" id="254931">
    <molecule id="Q8JZL7-3"/>
</dbReference>
<dbReference type="Antibodypedia" id="25022">
    <property type="antibodies" value="78 antibodies from 20 providers"/>
</dbReference>
<dbReference type="DNASU" id="320292"/>
<dbReference type="Ensembl" id="ENSMUST00000031276.15">
    <molecule id="Q8JZL7-1"/>
    <property type="protein sequence ID" value="ENSMUSP00000031276.9"/>
    <property type="gene ID" value="ENSMUSG00000089809.10"/>
</dbReference>
<dbReference type="Ensembl" id="ENSMUST00000146396.8">
    <molecule id="Q8JZL7-3"/>
    <property type="protein sequence ID" value="ENSMUSP00000125723.2"/>
    <property type="gene ID" value="ENSMUSG00000089809.10"/>
</dbReference>
<dbReference type="Ensembl" id="ENSMUST00000168092.8">
    <molecule id="Q8JZL7-2"/>
    <property type="protein sequence ID" value="ENSMUSP00000129652.2"/>
    <property type="gene ID" value="ENSMUSG00000089809.10"/>
</dbReference>
<dbReference type="GeneID" id="320292"/>
<dbReference type="KEGG" id="mmu:320292"/>
<dbReference type="UCSC" id="uc008ygl.1">
    <molecule id="Q8JZL7-1"/>
    <property type="organism name" value="mouse"/>
</dbReference>
<dbReference type="UCSC" id="uc008ygm.1">
    <molecule id="Q8JZL7-2"/>
    <property type="organism name" value="mouse"/>
</dbReference>
<dbReference type="AGR" id="MGI:2443755"/>
<dbReference type="CTD" id="153020"/>
<dbReference type="MGI" id="MGI:2443755">
    <property type="gene designation" value="Rasgef1b"/>
</dbReference>
<dbReference type="VEuPathDB" id="HostDB:ENSMUSG00000089809"/>
<dbReference type="eggNOG" id="KOG3417">
    <property type="taxonomic scope" value="Eukaryota"/>
</dbReference>
<dbReference type="eggNOG" id="KOG3541">
    <property type="taxonomic scope" value="Eukaryota"/>
</dbReference>
<dbReference type="GeneTree" id="ENSGT00940000155816"/>
<dbReference type="InParanoid" id="Q8JZL7"/>
<dbReference type="OrthoDB" id="8780at9989"/>
<dbReference type="PhylomeDB" id="Q8JZL7"/>
<dbReference type="TreeFam" id="TF313379"/>
<dbReference type="BioGRID-ORCS" id="320292">
    <property type="hits" value="0 hits in 75 CRISPR screens"/>
</dbReference>
<dbReference type="ChiTaRS" id="Rasgef1b">
    <property type="organism name" value="mouse"/>
</dbReference>
<dbReference type="PRO" id="PR:Q8JZL7"/>
<dbReference type="Proteomes" id="UP000000589">
    <property type="component" value="Chromosome 5"/>
</dbReference>
<dbReference type="RNAct" id="Q8JZL7">
    <property type="molecule type" value="protein"/>
</dbReference>
<dbReference type="Bgee" id="ENSMUSG00000089809">
    <property type="expression patterns" value="Expressed in interventricular septum and 202 other cell types or tissues"/>
</dbReference>
<dbReference type="ExpressionAtlas" id="Q8JZL7">
    <property type="expression patterns" value="baseline and differential"/>
</dbReference>
<dbReference type="GO" id="GO:0005769">
    <property type="term" value="C:early endosome"/>
    <property type="evidence" value="ECO:0007669"/>
    <property type="project" value="UniProtKB-SubCell"/>
</dbReference>
<dbReference type="GO" id="GO:0005770">
    <property type="term" value="C:late endosome"/>
    <property type="evidence" value="ECO:0007669"/>
    <property type="project" value="UniProtKB-SubCell"/>
</dbReference>
<dbReference type="GO" id="GO:0030496">
    <property type="term" value="C:midbody"/>
    <property type="evidence" value="ECO:0007669"/>
    <property type="project" value="UniProtKB-SubCell"/>
</dbReference>
<dbReference type="GO" id="GO:0005085">
    <property type="term" value="F:guanyl-nucleotide exchange factor activity"/>
    <property type="evidence" value="ECO:0000250"/>
    <property type="project" value="UniProtKB"/>
</dbReference>
<dbReference type="GO" id="GO:0007264">
    <property type="term" value="P:small GTPase-mediated signal transduction"/>
    <property type="evidence" value="ECO:0007669"/>
    <property type="project" value="InterPro"/>
</dbReference>
<dbReference type="CDD" id="cd00155">
    <property type="entry name" value="RasGEF"/>
    <property type="match status" value="1"/>
</dbReference>
<dbReference type="CDD" id="cd06224">
    <property type="entry name" value="REM"/>
    <property type="match status" value="1"/>
</dbReference>
<dbReference type="FunFam" id="1.10.840.10:FF:000008">
    <property type="entry name" value="Ras-GEF domain-containing family member 1B"/>
    <property type="match status" value="1"/>
</dbReference>
<dbReference type="FunFam" id="1.20.870.10:FF:000007">
    <property type="entry name" value="Ras-GEF domain-containing family member 1B"/>
    <property type="match status" value="1"/>
</dbReference>
<dbReference type="Gene3D" id="1.10.840.10">
    <property type="entry name" value="Ras guanine-nucleotide exchange factors catalytic domain"/>
    <property type="match status" value="1"/>
</dbReference>
<dbReference type="Gene3D" id="1.20.870.10">
    <property type="entry name" value="Son of sevenless (SoS) protein Chain: S domain 1"/>
    <property type="match status" value="1"/>
</dbReference>
<dbReference type="InterPro" id="IPR008937">
    <property type="entry name" value="Ras-like_GEF"/>
</dbReference>
<dbReference type="InterPro" id="IPR000651">
    <property type="entry name" value="Ras-like_Gua-exchang_fac_N"/>
</dbReference>
<dbReference type="InterPro" id="IPR019804">
    <property type="entry name" value="Ras_G-nucl-exch_fac_CS"/>
</dbReference>
<dbReference type="InterPro" id="IPR023578">
    <property type="entry name" value="Ras_GEF_dom_sf"/>
</dbReference>
<dbReference type="InterPro" id="IPR001895">
    <property type="entry name" value="RASGEF_cat_dom"/>
</dbReference>
<dbReference type="InterPro" id="IPR036964">
    <property type="entry name" value="RASGEF_cat_dom_sf"/>
</dbReference>
<dbReference type="PANTHER" id="PTHR23113">
    <property type="entry name" value="GUANINE NUCLEOTIDE EXCHANGE FACTOR"/>
    <property type="match status" value="1"/>
</dbReference>
<dbReference type="PANTHER" id="PTHR23113:SF197">
    <property type="entry name" value="RAS-GEF DOMAIN-CONTAINING FAMILY MEMBER 1B"/>
    <property type="match status" value="1"/>
</dbReference>
<dbReference type="Pfam" id="PF00617">
    <property type="entry name" value="RasGEF"/>
    <property type="match status" value="1"/>
</dbReference>
<dbReference type="Pfam" id="PF00618">
    <property type="entry name" value="RasGEF_N"/>
    <property type="match status" value="1"/>
</dbReference>
<dbReference type="SMART" id="SM00147">
    <property type="entry name" value="RasGEF"/>
    <property type="match status" value="1"/>
</dbReference>
<dbReference type="SMART" id="SM00229">
    <property type="entry name" value="RasGEFN"/>
    <property type="match status" value="1"/>
</dbReference>
<dbReference type="SUPFAM" id="SSF48366">
    <property type="entry name" value="Ras GEF"/>
    <property type="match status" value="1"/>
</dbReference>
<dbReference type="PROSITE" id="PS00720">
    <property type="entry name" value="RASGEF"/>
    <property type="match status" value="1"/>
</dbReference>
<dbReference type="PROSITE" id="PS50009">
    <property type="entry name" value="RASGEF_CAT"/>
    <property type="match status" value="1"/>
</dbReference>
<dbReference type="PROSITE" id="PS50212">
    <property type="entry name" value="RASGEF_NTER"/>
    <property type="match status" value="1"/>
</dbReference>
<sequence>MPQTPPFSAMFDSSGYNRNLYQSAEDSCGGLYYHDNNLLSGSLEALIQHLVPNVDYYPDRTYIFTFLLSSRLFMHPYELMAKVCHLCVEHQRLSEGDGDKNQMRKIAPKILQLLTEWTETFPYDFRDERMMRNLKDLAHRMASGEEQTYRKNVQQMMQCLIRKLAALSQYEEVLAKLSSTATDRLTVLKTKPQSIQRDIMTVCSDPYTLAQQLTHIELERLNYIGPEEFVQAFVQKDPLDNDKSCYSERKKTRNLEAYVEWFNRLSYLVATEICMPVKKKHRARMIEYFIDVARECFNIGNFNSLMAIISGMNMSPVSRLKKTWAKVKTAKFDILEHQMDPSSNFYNYRTALRGAAQRSLTAHSSREKIVIPFFSLLIKDIYFLNEGCVNRLPNGHVNFEKFWELAKQVSEFMTWKQVECPFERDRKVLQYLLSVPVFSEDALYLASYESEGPENNIEKDRWKSLRSSLLGRV</sequence>
<gene>
    <name type="primary">Rasgef1b</name>
    <name type="synonym">Gpig4</name>
</gene>
<organism>
    <name type="scientific">Mus musculus</name>
    <name type="common">Mouse</name>
    <dbReference type="NCBI Taxonomy" id="10090"/>
    <lineage>
        <taxon>Eukaryota</taxon>
        <taxon>Metazoa</taxon>
        <taxon>Chordata</taxon>
        <taxon>Craniata</taxon>
        <taxon>Vertebrata</taxon>
        <taxon>Euteleostomi</taxon>
        <taxon>Mammalia</taxon>
        <taxon>Eutheria</taxon>
        <taxon>Euarchontoglires</taxon>
        <taxon>Glires</taxon>
        <taxon>Rodentia</taxon>
        <taxon>Myomorpha</taxon>
        <taxon>Muroidea</taxon>
        <taxon>Muridae</taxon>
        <taxon>Murinae</taxon>
        <taxon>Mus</taxon>
        <taxon>Mus</taxon>
    </lineage>
</organism>